<accession>C3PAI8</accession>
<protein>
    <recommendedName>
        <fullName evidence="1">ATP-dependent 6-phosphofructokinase</fullName>
        <shortName evidence="1">ATP-PFK</shortName>
        <shortName evidence="1">Phosphofructokinase</shortName>
        <ecNumber evidence="1">2.7.1.11</ecNumber>
    </recommendedName>
    <alternativeName>
        <fullName evidence="1">Phosphohexokinase</fullName>
    </alternativeName>
</protein>
<proteinExistence type="inferred from homology"/>
<gene>
    <name evidence="1" type="primary">pfkA</name>
    <name type="ordered locus">BAA_4855</name>
</gene>
<dbReference type="EC" id="2.7.1.11" evidence="1"/>
<dbReference type="EMBL" id="CP001598">
    <property type="protein sequence ID" value="ACQ50294.1"/>
    <property type="molecule type" value="Genomic_DNA"/>
</dbReference>
<dbReference type="RefSeq" id="WP_000821163.1">
    <property type="nucleotide sequence ID" value="NC_012659.1"/>
</dbReference>
<dbReference type="SMR" id="C3PAI8"/>
<dbReference type="GeneID" id="93006511"/>
<dbReference type="KEGG" id="bai:BAA_4855"/>
<dbReference type="HOGENOM" id="CLU_020655_0_1_9"/>
<dbReference type="UniPathway" id="UPA00109">
    <property type="reaction ID" value="UER00182"/>
</dbReference>
<dbReference type="GO" id="GO:0005945">
    <property type="term" value="C:6-phosphofructokinase complex"/>
    <property type="evidence" value="ECO:0007669"/>
    <property type="project" value="TreeGrafter"/>
</dbReference>
<dbReference type="GO" id="GO:0003872">
    <property type="term" value="F:6-phosphofructokinase activity"/>
    <property type="evidence" value="ECO:0007669"/>
    <property type="project" value="UniProtKB-UniRule"/>
</dbReference>
<dbReference type="GO" id="GO:0016208">
    <property type="term" value="F:AMP binding"/>
    <property type="evidence" value="ECO:0007669"/>
    <property type="project" value="TreeGrafter"/>
</dbReference>
<dbReference type="GO" id="GO:0005524">
    <property type="term" value="F:ATP binding"/>
    <property type="evidence" value="ECO:0007669"/>
    <property type="project" value="UniProtKB-KW"/>
</dbReference>
<dbReference type="GO" id="GO:0070095">
    <property type="term" value="F:fructose-6-phosphate binding"/>
    <property type="evidence" value="ECO:0007669"/>
    <property type="project" value="TreeGrafter"/>
</dbReference>
<dbReference type="GO" id="GO:0042802">
    <property type="term" value="F:identical protein binding"/>
    <property type="evidence" value="ECO:0007669"/>
    <property type="project" value="TreeGrafter"/>
</dbReference>
<dbReference type="GO" id="GO:0046872">
    <property type="term" value="F:metal ion binding"/>
    <property type="evidence" value="ECO:0007669"/>
    <property type="project" value="UniProtKB-KW"/>
</dbReference>
<dbReference type="GO" id="GO:0048029">
    <property type="term" value="F:monosaccharide binding"/>
    <property type="evidence" value="ECO:0007669"/>
    <property type="project" value="TreeGrafter"/>
</dbReference>
<dbReference type="GO" id="GO:0061621">
    <property type="term" value="P:canonical glycolysis"/>
    <property type="evidence" value="ECO:0007669"/>
    <property type="project" value="TreeGrafter"/>
</dbReference>
<dbReference type="GO" id="GO:0030388">
    <property type="term" value="P:fructose 1,6-bisphosphate metabolic process"/>
    <property type="evidence" value="ECO:0007669"/>
    <property type="project" value="TreeGrafter"/>
</dbReference>
<dbReference type="GO" id="GO:0006002">
    <property type="term" value="P:fructose 6-phosphate metabolic process"/>
    <property type="evidence" value="ECO:0007669"/>
    <property type="project" value="InterPro"/>
</dbReference>
<dbReference type="CDD" id="cd00763">
    <property type="entry name" value="Bacterial_PFK"/>
    <property type="match status" value="1"/>
</dbReference>
<dbReference type="FunFam" id="3.40.50.450:FF:000001">
    <property type="entry name" value="ATP-dependent 6-phosphofructokinase"/>
    <property type="match status" value="1"/>
</dbReference>
<dbReference type="FunFam" id="3.40.50.460:FF:000002">
    <property type="entry name" value="ATP-dependent 6-phosphofructokinase"/>
    <property type="match status" value="1"/>
</dbReference>
<dbReference type="Gene3D" id="3.40.50.450">
    <property type="match status" value="1"/>
</dbReference>
<dbReference type="Gene3D" id="3.40.50.460">
    <property type="entry name" value="Phosphofructokinase domain"/>
    <property type="match status" value="1"/>
</dbReference>
<dbReference type="HAMAP" id="MF_00339">
    <property type="entry name" value="Phosphofructokinase_I_B1"/>
    <property type="match status" value="1"/>
</dbReference>
<dbReference type="InterPro" id="IPR022953">
    <property type="entry name" value="ATP_PFK"/>
</dbReference>
<dbReference type="InterPro" id="IPR012003">
    <property type="entry name" value="ATP_PFK_prok-type"/>
</dbReference>
<dbReference type="InterPro" id="IPR012828">
    <property type="entry name" value="PFKA_ATP_prok"/>
</dbReference>
<dbReference type="InterPro" id="IPR015912">
    <property type="entry name" value="Phosphofructokinase_CS"/>
</dbReference>
<dbReference type="InterPro" id="IPR000023">
    <property type="entry name" value="Phosphofructokinase_dom"/>
</dbReference>
<dbReference type="InterPro" id="IPR035966">
    <property type="entry name" value="PKF_sf"/>
</dbReference>
<dbReference type="NCBIfam" id="TIGR02482">
    <property type="entry name" value="PFKA_ATP"/>
    <property type="match status" value="1"/>
</dbReference>
<dbReference type="NCBIfam" id="NF002872">
    <property type="entry name" value="PRK03202.1"/>
    <property type="match status" value="1"/>
</dbReference>
<dbReference type="PANTHER" id="PTHR13697:SF4">
    <property type="entry name" value="ATP-DEPENDENT 6-PHOSPHOFRUCTOKINASE"/>
    <property type="match status" value="1"/>
</dbReference>
<dbReference type="PANTHER" id="PTHR13697">
    <property type="entry name" value="PHOSPHOFRUCTOKINASE"/>
    <property type="match status" value="1"/>
</dbReference>
<dbReference type="Pfam" id="PF00365">
    <property type="entry name" value="PFK"/>
    <property type="match status" value="1"/>
</dbReference>
<dbReference type="PIRSF" id="PIRSF000532">
    <property type="entry name" value="ATP_PFK_prok"/>
    <property type="match status" value="1"/>
</dbReference>
<dbReference type="PRINTS" id="PR00476">
    <property type="entry name" value="PHFRCTKINASE"/>
</dbReference>
<dbReference type="SUPFAM" id="SSF53784">
    <property type="entry name" value="Phosphofructokinase"/>
    <property type="match status" value="1"/>
</dbReference>
<dbReference type="PROSITE" id="PS00433">
    <property type="entry name" value="PHOSPHOFRUCTOKINASE"/>
    <property type="match status" value="1"/>
</dbReference>
<keyword id="KW-0021">Allosteric enzyme</keyword>
<keyword id="KW-0067">ATP-binding</keyword>
<keyword id="KW-0963">Cytoplasm</keyword>
<keyword id="KW-0324">Glycolysis</keyword>
<keyword id="KW-0418">Kinase</keyword>
<keyword id="KW-0460">Magnesium</keyword>
<keyword id="KW-0479">Metal-binding</keyword>
<keyword id="KW-0547">Nucleotide-binding</keyword>
<keyword id="KW-0808">Transferase</keyword>
<reference key="1">
    <citation type="submission" date="2009-04" db="EMBL/GenBank/DDBJ databases">
        <title>Genome sequence of Bacillus anthracis A0248.</title>
        <authorList>
            <person name="Dodson R.J."/>
            <person name="Munk A.C."/>
            <person name="Bruce D."/>
            <person name="Detter C."/>
            <person name="Tapia R."/>
            <person name="Sutton G."/>
            <person name="Sims D."/>
            <person name="Brettin T."/>
        </authorList>
    </citation>
    <scope>NUCLEOTIDE SEQUENCE [LARGE SCALE GENOMIC DNA]</scope>
    <source>
        <strain>A0248</strain>
    </source>
</reference>
<name>PFKA_BACAA</name>
<organism>
    <name type="scientific">Bacillus anthracis (strain A0248)</name>
    <dbReference type="NCBI Taxonomy" id="592021"/>
    <lineage>
        <taxon>Bacteria</taxon>
        <taxon>Bacillati</taxon>
        <taxon>Bacillota</taxon>
        <taxon>Bacilli</taxon>
        <taxon>Bacillales</taxon>
        <taxon>Bacillaceae</taxon>
        <taxon>Bacillus</taxon>
        <taxon>Bacillus cereus group</taxon>
    </lineage>
</organism>
<sequence>MKRIGVLTSGGDSPGMNAAIRAVVRKAIFHDIEVYGIYHGYAGLISGHIEKLELGSVGDIIHRGGTKLYTARCPEFKDPEVRLKGIEQLKKHGIEGLVVIGGDGSYQGAKKLTEQGFPCVGVPGTIDNDIPGTDFTIGFDTALNTVIDAIDKIRDTATSHERTYVIEVMGRHAGDIALWAGLADGAETILIPEEEYDMEDVIARLKRGSERGKKHSIIVVAEGVGSAIDIGKHIEEATNFDTRVTVLGHVQRGGSPSAQDRVLASRLGARAVELLIAGKGGRCVGIQDNKLVDHDIIEALAQKHTIDKDMYQLSKELSI</sequence>
<comment type="function">
    <text evidence="1">Catalyzes the phosphorylation of D-fructose 6-phosphate to fructose 1,6-bisphosphate by ATP, the first committing step of glycolysis.</text>
</comment>
<comment type="catalytic activity">
    <reaction evidence="1">
        <text>beta-D-fructose 6-phosphate + ATP = beta-D-fructose 1,6-bisphosphate + ADP + H(+)</text>
        <dbReference type="Rhea" id="RHEA:16109"/>
        <dbReference type="ChEBI" id="CHEBI:15378"/>
        <dbReference type="ChEBI" id="CHEBI:30616"/>
        <dbReference type="ChEBI" id="CHEBI:32966"/>
        <dbReference type="ChEBI" id="CHEBI:57634"/>
        <dbReference type="ChEBI" id="CHEBI:456216"/>
        <dbReference type="EC" id="2.7.1.11"/>
    </reaction>
</comment>
<comment type="cofactor">
    <cofactor evidence="1">
        <name>Mg(2+)</name>
        <dbReference type="ChEBI" id="CHEBI:18420"/>
    </cofactor>
</comment>
<comment type="activity regulation">
    <text evidence="1">Allosterically activated by ADP and other diphosphonucleosides, and allosterically inhibited by phosphoenolpyruvate.</text>
</comment>
<comment type="pathway">
    <text evidence="1">Carbohydrate degradation; glycolysis; D-glyceraldehyde 3-phosphate and glycerone phosphate from D-glucose: step 3/4.</text>
</comment>
<comment type="subunit">
    <text evidence="1">Homotetramer.</text>
</comment>
<comment type="subcellular location">
    <subcellularLocation>
        <location evidence="1">Cytoplasm</location>
    </subcellularLocation>
</comment>
<comment type="similarity">
    <text evidence="1">Belongs to the phosphofructokinase type A (PFKA) family. ATP-dependent PFK group I subfamily. Prokaryotic clade 'B1' sub-subfamily.</text>
</comment>
<evidence type="ECO:0000255" key="1">
    <source>
        <dbReference type="HAMAP-Rule" id="MF_00339"/>
    </source>
</evidence>
<feature type="chain" id="PRO_1000192360" description="ATP-dependent 6-phosphofructokinase">
    <location>
        <begin position="1"/>
        <end position="319"/>
    </location>
</feature>
<feature type="active site" description="Proton acceptor" evidence="1">
    <location>
        <position position="127"/>
    </location>
</feature>
<feature type="binding site" evidence="1">
    <location>
        <position position="11"/>
    </location>
    <ligand>
        <name>ATP</name>
        <dbReference type="ChEBI" id="CHEBI:30616"/>
    </ligand>
</feature>
<feature type="binding site" evidence="1">
    <location>
        <begin position="21"/>
        <end position="25"/>
    </location>
    <ligand>
        <name>ADP</name>
        <dbReference type="ChEBI" id="CHEBI:456216"/>
        <note>allosteric activator; ligand shared between dimeric partners</note>
    </ligand>
</feature>
<feature type="binding site" evidence="1">
    <location>
        <begin position="72"/>
        <end position="73"/>
    </location>
    <ligand>
        <name>ATP</name>
        <dbReference type="ChEBI" id="CHEBI:30616"/>
    </ligand>
</feature>
<feature type="binding site" evidence="1">
    <location>
        <begin position="102"/>
        <end position="105"/>
    </location>
    <ligand>
        <name>ATP</name>
        <dbReference type="ChEBI" id="CHEBI:30616"/>
    </ligand>
</feature>
<feature type="binding site" evidence="1">
    <location>
        <position position="103"/>
    </location>
    <ligand>
        <name>Mg(2+)</name>
        <dbReference type="ChEBI" id="CHEBI:18420"/>
        <note>catalytic</note>
    </ligand>
</feature>
<feature type="binding site" description="in other chain" evidence="1">
    <location>
        <begin position="125"/>
        <end position="127"/>
    </location>
    <ligand>
        <name>substrate</name>
        <note>ligand shared between dimeric partners</note>
    </ligand>
</feature>
<feature type="binding site" description="in other chain" evidence="1">
    <location>
        <position position="154"/>
    </location>
    <ligand>
        <name>ADP</name>
        <dbReference type="ChEBI" id="CHEBI:456216"/>
        <note>allosteric activator; ligand shared between dimeric partners</note>
    </ligand>
</feature>
<feature type="binding site" evidence="1">
    <location>
        <position position="162"/>
    </location>
    <ligand>
        <name>substrate</name>
        <note>ligand shared between dimeric partners</note>
    </ligand>
</feature>
<feature type="binding site" description="in other chain" evidence="1">
    <location>
        <begin position="169"/>
        <end position="171"/>
    </location>
    <ligand>
        <name>substrate</name>
        <note>ligand shared between dimeric partners</note>
    </ligand>
</feature>
<feature type="binding site" description="in other chain" evidence="1">
    <location>
        <begin position="185"/>
        <end position="187"/>
    </location>
    <ligand>
        <name>ADP</name>
        <dbReference type="ChEBI" id="CHEBI:456216"/>
        <note>allosteric activator; ligand shared between dimeric partners</note>
    </ligand>
</feature>
<feature type="binding site" description="in other chain" evidence="1">
    <location>
        <position position="211"/>
    </location>
    <ligand>
        <name>ADP</name>
        <dbReference type="ChEBI" id="CHEBI:456216"/>
        <note>allosteric activator; ligand shared between dimeric partners</note>
    </ligand>
</feature>
<feature type="binding site" description="in other chain" evidence="1">
    <location>
        <begin position="213"/>
        <end position="215"/>
    </location>
    <ligand>
        <name>ADP</name>
        <dbReference type="ChEBI" id="CHEBI:456216"/>
        <note>allosteric activator; ligand shared between dimeric partners</note>
    </ligand>
</feature>
<feature type="binding site" description="in other chain" evidence="1">
    <location>
        <position position="222"/>
    </location>
    <ligand>
        <name>substrate</name>
        <note>ligand shared between dimeric partners</note>
    </ligand>
</feature>
<feature type="binding site" evidence="1">
    <location>
        <position position="243"/>
    </location>
    <ligand>
        <name>substrate</name>
        <note>ligand shared between dimeric partners</note>
    </ligand>
</feature>
<feature type="binding site" description="in other chain" evidence="1">
    <location>
        <begin position="249"/>
        <end position="252"/>
    </location>
    <ligand>
        <name>substrate</name>
        <note>ligand shared between dimeric partners</note>
    </ligand>
</feature>